<proteinExistence type="evidence at protein level"/>
<reference key="1">
    <citation type="journal article" date="2000" name="DNA Res.">
        <title>Prediction of the coding sequences of unidentified human genes. XVI. The complete sequences of 150 new cDNA clones from brain which code for large proteins in vitro.</title>
        <authorList>
            <person name="Nagase T."/>
            <person name="Kikuno R."/>
            <person name="Ishikawa K."/>
            <person name="Hirosawa M."/>
            <person name="Ohara O."/>
        </authorList>
    </citation>
    <scope>NUCLEOTIDE SEQUENCE [LARGE SCALE MRNA] (ISOFORM 1)</scope>
    <source>
        <tissue>Brain</tissue>
    </source>
</reference>
<reference key="2">
    <citation type="journal article" date="2004" name="Nat. Genet.">
        <title>Complete sequencing and characterization of 21,243 full-length human cDNAs.</title>
        <authorList>
            <person name="Ota T."/>
            <person name="Suzuki Y."/>
            <person name="Nishikawa T."/>
            <person name="Otsuki T."/>
            <person name="Sugiyama T."/>
            <person name="Irie R."/>
            <person name="Wakamatsu A."/>
            <person name="Hayashi K."/>
            <person name="Sato H."/>
            <person name="Nagai K."/>
            <person name="Kimura K."/>
            <person name="Makita H."/>
            <person name="Sekine M."/>
            <person name="Obayashi M."/>
            <person name="Nishi T."/>
            <person name="Shibahara T."/>
            <person name="Tanaka T."/>
            <person name="Ishii S."/>
            <person name="Yamamoto J."/>
            <person name="Saito K."/>
            <person name="Kawai Y."/>
            <person name="Isono Y."/>
            <person name="Nakamura Y."/>
            <person name="Nagahari K."/>
            <person name="Murakami K."/>
            <person name="Yasuda T."/>
            <person name="Iwayanagi T."/>
            <person name="Wagatsuma M."/>
            <person name="Shiratori A."/>
            <person name="Sudo H."/>
            <person name="Hosoiri T."/>
            <person name="Kaku Y."/>
            <person name="Kodaira H."/>
            <person name="Kondo H."/>
            <person name="Sugawara M."/>
            <person name="Takahashi M."/>
            <person name="Kanda K."/>
            <person name="Yokoi T."/>
            <person name="Furuya T."/>
            <person name="Kikkawa E."/>
            <person name="Omura Y."/>
            <person name="Abe K."/>
            <person name="Kamihara K."/>
            <person name="Katsuta N."/>
            <person name="Sato K."/>
            <person name="Tanikawa M."/>
            <person name="Yamazaki M."/>
            <person name="Ninomiya K."/>
            <person name="Ishibashi T."/>
            <person name="Yamashita H."/>
            <person name="Murakawa K."/>
            <person name="Fujimori K."/>
            <person name="Tanai H."/>
            <person name="Kimata M."/>
            <person name="Watanabe M."/>
            <person name="Hiraoka S."/>
            <person name="Chiba Y."/>
            <person name="Ishida S."/>
            <person name="Ono Y."/>
            <person name="Takiguchi S."/>
            <person name="Watanabe S."/>
            <person name="Yosida M."/>
            <person name="Hotuta T."/>
            <person name="Kusano J."/>
            <person name="Kanehori K."/>
            <person name="Takahashi-Fujii A."/>
            <person name="Hara H."/>
            <person name="Tanase T.-O."/>
            <person name="Nomura Y."/>
            <person name="Togiya S."/>
            <person name="Komai F."/>
            <person name="Hara R."/>
            <person name="Takeuchi K."/>
            <person name="Arita M."/>
            <person name="Imose N."/>
            <person name="Musashino K."/>
            <person name="Yuuki H."/>
            <person name="Oshima A."/>
            <person name="Sasaki N."/>
            <person name="Aotsuka S."/>
            <person name="Yoshikawa Y."/>
            <person name="Matsunawa H."/>
            <person name="Ichihara T."/>
            <person name="Shiohata N."/>
            <person name="Sano S."/>
            <person name="Moriya S."/>
            <person name="Momiyama H."/>
            <person name="Satoh N."/>
            <person name="Takami S."/>
            <person name="Terashima Y."/>
            <person name="Suzuki O."/>
            <person name="Nakagawa S."/>
            <person name="Senoh A."/>
            <person name="Mizoguchi H."/>
            <person name="Goto Y."/>
            <person name="Shimizu F."/>
            <person name="Wakebe H."/>
            <person name="Hishigaki H."/>
            <person name="Watanabe T."/>
            <person name="Sugiyama A."/>
            <person name="Takemoto M."/>
            <person name="Kawakami B."/>
            <person name="Yamazaki M."/>
            <person name="Watanabe K."/>
            <person name="Kumagai A."/>
            <person name="Itakura S."/>
            <person name="Fukuzumi Y."/>
            <person name="Fujimori Y."/>
            <person name="Komiyama M."/>
            <person name="Tashiro H."/>
            <person name="Tanigami A."/>
            <person name="Fujiwara T."/>
            <person name="Ono T."/>
            <person name="Yamada K."/>
            <person name="Fujii Y."/>
            <person name="Ozaki K."/>
            <person name="Hirao M."/>
            <person name="Ohmori Y."/>
            <person name="Kawabata A."/>
            <person name="Hikiji T."/>
            <person name="Kobatake N."/>
            <person name="Inagaki H."/>
            <person name="Ikema Y."/>
            <person name="Okamoto S."/>
            <person name="Okitani R."/>
            <person name="Kawakami T."/>
            <person name="Noguchi S."/>
            <person name="Itoh T."/>
            <person name="Shigeta K."/>
            <person name="Senba T."/>
            <person name="Matsumura K."/>
            <person name="Nakajima Y."/>
            <person name="Mizuno T."/>
            <person name="Morinaga M."/>
            <person name="Sasaki M."/>
            <person name="Togashi T."/>
            <person name="Oyama M."/>
            <person name="Hata H."/>
            <person name="Watanabe M."/>
            <person name="Komatsu T."/>
            <person name="Mizushima-Sugano J."/>
            <person name="Satoh T."/>
            <person name="Shirai Y."/>
            <person name="Takahashi Y."/>
            <person name="Nakagawa K."/>
            <person name="Okumura K."/>
            <person name="Nagase T."/>
            <person name="Nomura N."/>
            <person name="Kikuchi H."/>
            <person name="Masuho Y."/>
            <person name="Yamashita R."/>
            <person name="Nakai K."/>
            <person name="Yada T."/>
            <person name="Nakamura Y."/>
            <person name="Ohara O."/>
            <person name="Isogai T."/>
            <person name="Sugano S."/>
        </authorList>
    </citation>
    <scope>NUCLEOTIDE SEQUENCE [LARGE SCALE MRNA]</scope>
    <source>
        <tissue>Brain</tissue>
    </source>
</reference>
<reference key="3">
    <citation type="submission" date="2005-09" db="EMBL/GenBank/DDBJ databases">
        <authorList>
            <person name="Mural R.J."/>
            <person name="Istrail S."/>
            <person name="Sutton G.G."/>
            <person name="Florea L."/>
            <person name="Halpern A.L."/>
            <person name="Mobarry C.M."/>
            <person name="Lippert R."/>
            <person name="Walenz B."/>
            <person name="Shatkay H."/>
            <person name="Dew I."/>
            <person name="Miller J.R."/>
            <person name="Flanigan M.J."/>
            <person name="Edwards N.J."/>
            <person name="Bolanos R."/>
            <person name="Fasulo D."/>
            <person name="Halldorsson B.V."/>
            <person name="Hannenhalli S."/>
            <person name="Turner R."/>
            <person name="Yooseph S."/>
            <person name="Lu F."/>
            <person name="Nusskern D.R."/>
            <person name="Shue B.C."/>
            <person name="Zheng X.H."/>
            <person name="Zhong F."/>
            <person name="Delcher A.L."/>
            <person name="Huson D.H."/>
            <person name="Kravitz S.A."/>
            <person name="Mouchard L."/>
            <person name="Reinert K."/>
            <person name="Remington K.A."/>
            <person name="Clark A.G."/>
            <person name="Waterman M.S."/>
            <person name="Eichler E.E."/>
            <person name="Adams M.D."/>
            <person name="Hunkapiller M.W."/>
            <person name="Myers E.W."/>
            <person name="Venter J.C."/>
        </authorList>
    </citation>
    <scope>NUCLEOTIDE SEQUENCE [LARGE SCALE GENOMIC DNA]</scope>
</reference>
<reference key="4">
    <citation type="journal article" date="2004" name="Genome Res.">
        <title>The status, quality, and expansion of the NIH full-length cDNA project: the Mammalian Gene Collection (MGC).</title>
        <authorList>
            <consortium name="The MGC Project Team"/>
        </authorList>
    </citation>
    <scope>NUCLEOTIDE SEQUENCE [LARGE SCALE MRNA] (ISOFORM 1)</scope>
</reference>
<reference key="5">
    <citation type="journal article" date="2007" name="BMC Genomics">
        <title>The full-ORF clone resource of the German cDNA consortium.</title>
        <authorList>
            <person name="Bechtel S."/>
            <person name="Rosenfelder H."/>
            <person name="Duda A."/>
            <person name="Schmidt C.P."/>
            <person name="Ernst U."/>
            <person name="Wellenreuther R."/>
            <person name="Mehrle A."/>
            <person name="Schuster C."/>
            <person name="Bahr A."/>
            <person name="Bloecker H."/>
            <person name="Heubner D."/>
            <person name="Hoerlein A."/>
            <person name="Michel G."/>
            <person name="Wedler H."/>
            <person name="Koehrer K."/>
            <person name="Ottenwaelder B."/>
            <person name="Poustka A."/>
            <person name="Wiemann S."/>
            <person name="Schupp I."/>
        </authorList>
    </citation>
    <scope>NUCLEOTIDE SEQUENCE [LARGE SCALE MRNA] OF 646-863 (ISOFORM 2)</scope>
    <source>
        <tissue>Melanoma</tissue>
    </source>
</reference>
<keyword id="KW-0025">Alternative splicing</keyword>
<keyword id="KW-1267">Proteomics identification</keyword>
<keyword id="KW-1185">Reference proteome</keyword>
<comment type="alternative products">
    <event type="alternative splicing"/>
    <isoform>
        <id>Q9P2F5-1</id>
        <name>1</name>
        <sequence type="displayed"/>
    </isoform>
    <isoform>
        <id>Q9P2F5-2</id>
        <name>2</name>
        <sequence type="described" ref="VSP_030072 VSP_030073"/>
    </isoform>
</comment>
<comment type="sequence caution" evidence="3">
    <conflict type="erroneous initiation">
        <sequence resource="EMBL-CDS" id="BAA92630"/>
    </conflict>
</comment>
<evidence type="ECO:0000256" key="1">
    <source>
        <dbReference type="SAM" id="MobiDB-lite"/>
    </source>
</evidence>
<evidence type="ECO:0000303" key="2">
    <source>
    </source>
</evidence>
<evidence type="ECO:0000305" key="3"/>
<feature type="chain" id="PRO_0000313629" description="Storkhead-box protein 2">
    <location>
        <begin position="1"/>
        <end position="926"/>
    </location>
</feature>
<feature type="region of interest" description="Disordered" evidence="1">
    <location>
        <begin position="1"/>
        <end position="32"/>
    </location>
</feature>
<feature type="region of interest" description="Disordered" evidence="1">
    <location>
        <begin position="338"/>
        <end position="391"/>
    </location>
</feature>
<feature type="region of interest" description="Disordered" evidence="1">
    <location>
        <begin position="452"/>
        <end position="529"/>
    </location>
</feature>
<feature type="region of interest" description="Disordered" evidence="1">
    <location>
        <begin position="564"/>
        <end position="588"/>
    </location>
</feature>
<feature type="region of interest" description="Disordered" evidence="1">
    <location>
        <begin position="632"/>
        <end position="672"/>
    </location>
</feature>
<feature type="region of interest" description="Disordered" evidence="1">
    <location>
        <begin position="724"/>
        <end position="803"/>
    </location>
</feature>
<feature type="region of interest" description="Disordered" evidence="1">
    <location>
        <begin position="825"/>
        <end position="926"/>
    </location>
</feature>
<feature type="compositionally biased region" description="Basic and acidic residues" evidence="1">
    <location>
        <begin position="18"/>
        <end position="32"/>
    </location>
</feature>
<feature type="compositionally biased region" description="Basic residues" evidence="1">
    <location>
        <begin position="353"/>
        <end position="378"/>
    </location>
</feature>
<feature type="compositionally biased region" description="Basic and acidic residues" evidence="1">
    <location>
        <begin position="379"/>
        <end position="391"/>
    </location>
</feature>
<feature type="compositionally biased region" description="Basic residues" evidence="1">
    <location>
        <begin position="463"/>
        <end position="472"/>
    </location>
</feature>
<feature type="compositionally biased region" description="Basic and acidic residues" evidence="1">
    <location>
        <begin position="473"/>
        <end position="495"/>
    </location>
</feature>
<feature type="compositionally biased region" description="Polar residues" evidence="1">
    <location>
        <begin position="518"/>
        <end position="529"/>
    </location>
</feature>
<feature type="compositionally biased region" description="Basic and acidic residues" evidence="1">
    <location>
        <begin position="632"/>
        <end position="658"/>
    </location>
</feature>
<feature type="compositionally biased region" description="Polar residues" evidence="1">
    <location>
        <begin position="746"/>
        <end position="769"/>
    </location>
</feature>
<feature type="compositionally biased region" description="Basic and acidic residues" evidence="1">
    <location>
        <begin position="785"/>
        <end position="799"/>
    </location>
</feature>
<feature type="compositionally biased region" description="Polar residues" evidence="1">
    <location>
        <begin position="847"/>
        <end position="884"/>
    </location>
</feature>
<feature type="compositionally biased region" description="Polar residues" evidence="1">
    <location>
        <begin position="914"/>
        <end position="926"/>
    </location>
</feature>
<feature type="splice variant" id="VSP_030072" description="In isoform 2." evidence="2">
    <original>T</original>
    <variation>N</variation>
    <location>
        <position position="863"/>
    </location>
</feature>
<feature type="splice variant" id="VSP_030073" description="In isoform 2." evidence="2">
    <location>
        <begin position="864"/>
        <end position="926"/>
    </location>
</feature>
<sequence length="926" mass="102671">MKKTRSTTLRRAWPSSDFSDRASDRMRSRSEKDYRLHKRFPAAFAPQASRGYMTSGDVSPISMSPISQSQFIPLGEILCLAISAMNSARKPVTQEALMEHLTTCFPGVPTPSQEILRHTLNTLVRERKIYPTPDGYFIVTPQTYFITPSLIRTNSKWYHLDERIPDRSQCTSPQPGTITPSASGCVRERTLPRNHCDSCHCCREDVHSTHAPTLQRKSAKDCKDPYCPPSLCQVPPTEKSKSTVNFSYKTETLSKPKDSEKQSKKFGLKLFRLSFKKDKTKQLANFSAQFPPEEWPLRDEDTPATIPREVEMEIIRRINPDLTVENVMRHTALMKKLEEEKAQRSKAGSSAHHSGRSKKSRTHRKSHGKSRSHSKTRVSKGDPSDGSHLDIPAEREYDFCDPLTRVPREGCFIIEHKGDNFIMHSNTNVLESHFPMTPEWDVSGELAKRRTEMPFPEPSRGSSHSKVHRSHSHTQDRRSRNERSNKAKERSRSMDNSKGPLGASSLGTPEDLAEGCSQDDQTPSQSYIDDSTLRPAQTVSLQRAHISSTSYKEVCIPEIVSGSKEPSSACSLLEPGKPPESLPSYGELNSCPTKTATDDYFQCNTSSETVLTAPSPLGKNKEDHDTLTLAEGVKKLSPSDRQVPHSSREPVGHKEESPKGPGGGPAASGGVAEGIANGRLVQHHGAEPSSLDKRKEIFSKDTLFKPLHSTLSVNSYHKSSLSLLKSHPKTPADTLPGRCEKLEPSLGTSAAQAMPASQRQQESGGNQEASFDYYNVSDDDDSEEGANKNTEEEKNREDVGTMQWLLEREKERDLQRKFEKNLTLLAPKETDSSSNQRATHSARLDSMDSSSITVDSGFNSPRTRESLASNTSSIVESNRRQNPALSPAHGGAGPAFNFRASAEPPTNEAEKLQKPSNCLQASVTSV</sequence>
<protein>
    <recommendedName>
        <fullName>Storkhead-box protein 2</fullName>
    </recommendedName>
</protein>
<gene>
    <name type="primary">STOX2</name>
    <name type="synonym">KIAA1392</name>
</gene>
<accession>Q9P2F5</accession>
<accession>A6H8U4</accession>
<accession>Q9NPS8</accession>
<organism>
    <name type="scientific">Homo sapiens</name>
    <name type="common">Human</name>
    <dbReference type="NCBI Taxonomy" id="9606"/>
    <lineage>
        <taxon>Eukaryota</taxon>
        <taxon>Metazoa</taxon>
        <taxon>Chordata</taxon>
        <taxon>Craniata</taxon>
        <taxon>Vertebrata</taxon>
        <taxon>Euteleostomi</taxon>
        <taxon>Mammalia</taxon>
        <taxon>Eutheria</taxon>
        <taxon>Euarchontoglires</taxon>
        <taxon>Primates</taxon>
        <taxon>Haplorrhini</taxon>
        <taxon>Catarrhini</taxon>
        <taxon>Hominidae</taxon>
        <taxon>Homo</taxon>
    </lineage>
</organism>
<name>STOX2_HUMAN</name>
<dbReference type="EMBL" id="AB037813">
    <property type="protein sequence ID" value="BAA92630.1"/>
    <property type="status" value="ALT_INIT"/>
    <property type="molecule type" value="mRNA"/>
</dbReference>
<dbReference type="EMBL" id="AK289840">
    <property type="protein sequence ID" value="BAF82529.1"/>
    <property type="molecule type" value="mRNA"/>
</dbReference>
<dbReference type="EMBL" id="CH471056">
    <property type="protein sequence ID" value="EAX04684.1"/>
    <property type="molecule type" value="Genomic_DNA"/>
</dbReference>
<dbReference type="EMBL" id="BC146754">
    <property type="protein sequence ID" value="AAI46755.1"/>
    <property type="molecule type" value="mRNA"/>
</dbReference>
<dbReference type="EMBL" id="AL390216">
    <property type="protein sequence ID" value="CAB99230.1"/>
    <property type="molecule type" value="mRNA"/>
</dbReference>
<dbReference type="CCDS" id="CCDS47167.1">
    <molecule id="Q9P2F5-1"/>
</dbReference>
<dbReference type="PIR" id="T51887">
    <property type="entry name" value="T51887"/>
</dbReference>
<dbReference type="RefSeq" id="NP_064610.1">
    <molecule id="Q9P2F5-1"/>
    <property type="nucleotide sequence ID" value="NM_020225.3"/>
</dbReference>
<dbReference type="BioGRID" id="121295">
    <property type="interactions" value="17"/>
</dbReference>
<dbReference type="FunCoup" id="Q9P2F5">
    <property type="interactions" value="674"/>
</dbReference>
<dbReference type="IntAct" id="Q9P2F5">
    <property type="interactions" value="15"/>
</dbReference>
<dbReference type="STRING" id="9606.ENSP00000311257"/>
<dbReference type="GlyGen" id="Q9P2F5">
    <property type="glycosylation" value="4 sites, 1 O-linked glycan (1 site)"/>
</dbReference>
<dbReference type="iPTMnet" id="Q9P2F5"/>
<dbReference type="PhosphoSitePlus" id="Q9P2F5"/>
<dbReference type="BioMuta" id="STOX2"/>
<dbReference type="DMDM" id="166223490"/>
<dbReference type="jPOST" id="Q9P2F5"/>
<dbReference type="MassIVE" id="Q9P2F5"/>
<dbReference type="PaxDb" id="9606-ENSP00000311257"/>
<dbReference type="PeptideAtlas" id="Q9P2F5"/>
<dbReference type="ProteomicsDB" id="83801">
    <molecule id="Q9P2F5-1"/>
</dbReference>
<dbReference type="ProteomicsDB" id="83802">
    <molecule id="Q9P2F5-2"/>
</dbReference>
<dbReference type="Antibodypedia" id="56777">
    <property type="antibodies" value="54 antibodies from 21 providers"/>
</dbReference>
<dbReference type="DNASU" id="56977"/>
<dbReference type="Ensembl" id="ENST00000308497.9">
    <molecule id="Q9P2F5-1"/>
    <property type="protein sequence ID" value="ENSP00000311257.4"/>
    <property type="gene ID" value="ENSG00000173320.12"/>
</dbReference>
<dbReference type="GeneID" id="56977"/>
<dbReference type="KEGG" id="hsa:56977"/>
<dbReference type="MANE-Select" id="ENST00000308497.9">
    <property type="protein sequence ID" value="ENSP00000311257.4"/>
    <property type="RefSeq nucleotide sequence ID" value="NM_020225.3"/>
    <property type="RefSeq protein sequence ID" value="NP_064610.1"/>
</dbReference>
<dbReference type="UCSC" id="uc003ivz.2">
    <molecule id="Q9P2F5-1"/>
    <property type="organism name" value="human"/>
</dbReference>
<dbReference type="AGR" id="HGNC:25450"/>
<dbReference type="CTD" id="56977"/>
<dbReference type="DisGeNET" id="56977"/>
<dbReference type="GeneCards" id="STOX2"/>
<dbReference type="HGNC" id="HGNC:25450">
    <property type="gene designation" value="STOX2"/>
</dbReference>
<dbReference type="HPA" id="ENSG00000173320">
    <property type="expression patterns" value="Low tissue specificity"/>
</dbReference>
<dbReference type="MIM" id="617359">
    <property type="type" value="gene"/>
</dbReference>
<dbReference type="neXtProt" id="NX_Q9P2F5"/>
<dbReference type="OpenTargets" id="ENSG00000173320"/>
<dbReference type="PharmGKB" id="PA142670861"/>
<dbReference type="VEuPathDB" id="HostDB:ENSG00000173320"/>
<dbReference type="eggNOG" id="KOG3897">
    <property type="taxonomic scope" value="Eukaryota"/>
</dbReference>
<dbReference type="GeneTree" id="ENSGT00520000055589"/>
<dbReference type="HOGENOM" id="CLU_013650_0_0_1"/>
<dbReference type="InParanoid" id="Q9P2F5"/>
<dbReference type="OMA" id="SGCIRER"/>
<dbReference type="OrthoDB" id="10020110at2759"/>
<dbReference type="PAN-GO" id="Q9P2F5">
    <property type="GO annotations" value="5 GO annotations based on evolutionary models"/>
</dbReference>
<dbReference type="PhylomeDB" id="Q9P2F5"/>
<dbReference type="TreeFam" id="TF331863"/>
<dbReference type="PathwayCommons" id="Q9P2F5"/>
<dbReference type="SignaLink" id="Q9P2F5"/>
<dbReference type="BioGRID-ORCS" id="56977">
    <property type="hits" value="9 hits in 1135 CRISPR screens"/>
</dbReference>
<dbReference type="ChiTaRS" id="STOX2">
    <property type="organism name" value="human"/>
</dbReference>
<dbReference type="GenomeRNAi" id="56977"/>
<dbReference type="Pharos" id="Q9P2F5">
    <property type="development level" value="Tbio"/>
</dbReference>
<dbReference type="PRO" id="PR:Q9P2F5"/>
<dbReference type="Proteomes" id="UP000005640">
    <property type="component" value="Chromosome 4"/>
</dbReference>
<dbReference type="RNAct" id="Q9P2F5">
    <property type="molecule type" value="protein"/>
</dbReference>
<dbReference type="Bgee" id="ENSG00000173320">
    <property type="expression patterns" value="Expressed in Brodmann (1909) area 23 and 186 other cell types or tissues"/>
</dbReference>
<dbReference type="ExpressionAtlas" id="Q9P2F5">
    <property type="expression patterns" value="baseline and differential"/>
</dbReference>
<dbReference type="GO" id="GO:0005737">
    <property type="term" value="C:cytoplasm"/>
    <property type="evidence" value="ECO:0000318"/>
    <property type="project" value="GO_Central"/>
</dbReference>
<dbReference type="GO" id="GO:0005634">
    <property type="term" value="C:nucleus"/>
    <property type="evidence" value="ECO:0000318"/>
    <property type="project" value="GO_Central"/>
</dbReference>
<dbReference type="GO" id="GO:0003700">
    <property type="term" value="F:DNA-binding transcription factor activity"/>
    <property type="evidence" value="ECO:0000303"/>
    <property type="project" value="ARUK-UCL"/>
</dbReference>
<dbReference type="GO" id="GO:0000977">
    <property type="term" value="F:RNA polymerase II transcription regulatory region sequence-specific DNA binding"/>
    <property type="evidence" value="ECO:0000318"/>
    <property type="project" value="GO_Central"/>
</dbReference>
<dbReference type="GO" id="GO:0009792">
    <property type="term" value="P:embryo development ending in birth or egg hatching"/>
    <property type="evidence" value="ECO:0000270"/>
    <property type="project" value="UniProtKB"/>
</dbReference>
<dbReference type="GO" id="GO:0001893">
    <property type="term" value="P:maternal placenta development"/>
    <property type="evidence" value="ECO:0000270"/>
    <property type="project" value="UniProtKB"/>
</dbReference>
<dbReference type="GO" id="GO:0006357">
    <property type="term" value="P:regulation of transcription by RNA polymerase II"/>
    <property type="evidence" value="ECO:0000303"/>
    <property type="project" value="ARUK-UCL"/>
</dbReference>
<dbReference type="GO" id="GO:0009617">
    <property type="term" value="P:response to bacterium"/>
    <property type="evidence" value="ECO:0007669"/>
    <property type="project" value="Ensembl"/>
</dbReference>
<dbReference type="InterPro" id="IPR019391">
    <property type="entry name" value="Storkhead-box_winged-helix"/>
</dbReference>
<dbReference type="InterPro" id="IPR040126">
    <property type="entry name" value="STOX1/2"/>
</dbReference>
<dbReference type="PANTHER" id="PTHR22437:SF2">
    <property type="entry name" value="STORKHEAD-BOX PROTEIN 2"/>
    <property type="match status" value="1"/>
</dbReference>
<dbReference type="PANTHER" id="PTHR22437">
    <property type="entry name" value="WINGED HELIX DOMAIN-CONTAINING PROTEIN"/>
    <property type="match status" value="1"/>
</dbReference>
<dbReference type="Pfam" id="PF10264">
    <property type="entry name" value="Stork_head"/>
    <property type="match status" value="1"/>
</dbReference>